<gene>
    <name evidence="1" type="primary">metE</name>
    <name type="ordered locus">SAV_2046</name>
</gene>
<dbReference type="EC" id="2.1.1.14" evidence="1"/>
<dbReference type="EMBL" id="BA000030">
    <property type="protein sequence ID" value="BAC69757.1"/>
    <property type="molecule type" value="Genomic_DNA"/>
</dbReference>
<dbReference type="RefSeq" id="WP_010983486.1">
    <property type="nucleotide sequence ID" value="NZ_JZJK01000086.1"/>
</dbReference>
<dbReference type="SMR" id="Q82LG4"/>
<dbReference type="GeneID" id="41539145"/>
<dbReference type="KEGG" id="sma:SAVERM_2046"/>
<dbReference type="eggNOG" id="COG0620">
    <property type="taxonomic scope" value="Bacteria"/>
</dbReference>
<dbReference type="HOGENOM" id="CLU_013175_0_0_11"/>
<dbReference type="OrthoDB" id="244285at2"/>
<dbReference type="UniPathway" id="UPA00051">
    <property type="reaction ID" value="UER00082"/>
</dbReference>
<dbReference type="Proteomes" id="UP000000428">
    <property type="component" value="Chromosome"/>
</dbReference>
<dbReference type="GO" id="GO:0003871">
    <property type="term" value="F:5-methyltetrahydropteroyltriglutamate-homocysteine S-methyltransferase activity"/>
    <property type="evidence" value="ECO:0007669"/>
    <property type="project" value="UniProtKB-UniRule"/>
</dbReference>
<dbReference type="GO" id="GO:0008270">
    <property type="term" value="F:zinc ion binding"/>
    <property type="evidence" value="ECO:0007669"/>
    <property type="project" value="InterPro"/>
</dbReference>
<dbReference type="GO" id="GO:0009086">
    <property type="term" value="P:methionine biosynthetic process"/>
    <property type="evidence" value="ECO:0007669"/>
    <property type="project" value="UniProtKB-UniRule"/>
</dbReference>
<dbReference type="GO" id="GO:0032259">
    <property type="term" value="P:methylation"/>
    <property type="evidence" value="ECO:0007669"/>
    <property type="project" value="UniProtKB-KW"/>
</dbReference>
<dbReference type="CDD" id="cd03311">
    <property type="entry name" value="CIMS_C_terminal_like"/>
    <property type="match status" value="1"/>
</dbReference>
<dbReference type="CDD" id="cd03312">
    <property type="entry name" value="CIMS_N_terminal_like"/>
    <property type="match status" value="1"/>
</dbReference>
<dbReference type="Gene3D" id="3.20.20.210">
    <property type="match status" value="2"/>
</dbReference>
<dbReference type="HAMAP" id="MF_00172">
    <property type="entry name" value="Meth_synth"/>
    <property type="match status" value="1"/>
</dbReference>
<dbReference type="InterPro" id="IPR013215">
    <property type="entry name" value="Cbl-indep_Met_Synth_N"/>
</dbReference>
<dbReference type="InterPro" id="IPR006276">
    <property type="entry name" value="Cobalamin-indep_Met_synthase"/>
</dbReference>
<dbReference type="InterPro" id="IPR002629">
    <property type="entry name" value="Met_Synth_C/arc"/>
</dbReference>
<dbReference type="InterPro" id="IPR038071">
    <property type="entry name" value="UROD/MetE-like_sf"/>
</dbReference>
<dbReference type="NCBIfam" id="TIGR01371">
    <property type="entry name" value="met_syn_B12ind"/>
    <property type="match status" value="1"/>
</dbReference>
<dbReference type="NCBIfam" id="NF003556">
    <property type="entry name" value="PRK05222.1"/>
    <property type="match status" value="1"/>
</dbReference>
<dbReference type="PANTHER" id="PTHR30519">
    <property type="entry name" value="5-METHYLTETRAHYDROPTEROYLTRIGLUTAMATE--HOMOCYSTEINE METHYLTRANSFERASE"/>
    <property type="match status" value="1"/>
</dbReference>
<dbReference type="Pfam" id="PF08267">
    <property type="entry name" value="Meth_synt_1"/>
    <property type="match status" value="1"/>
</dbReference>
<dbReference type="Pfam" id="PF01717">
    <property type="entry name" value="Meth_synt_2"/>
    <property type="match status" value="1"/>
</dbReference>
<dbReference type="PIRSF" id="PIRSF000382">
    <property type="entry name" value="MeTrfase_B12_ind"/>
    <property type="match status" value="1"/>
</dbReference>
<dbReference type="SUPFAM" id="SSF51726">
    <property type="entry name" value="UROD/MetE-like"/>
    <property type="match status" value="2"/>
</dbReference>
<proteinExistence type="inferred from homology"/>
<organism>
    <name type="scientific">Streptomyces avermitilis (strain ATCC 31267 / DSM 46492 / JCM 5070 / NBRC 14893 / NCIMB 12804 / NRRL 8165 / MA-4680)</name>
    <dbReference type="NCBI Taxonomy" id="227882"/>
    <lineage>
        <taxon>Bacteria</taxon>
        <taxon>Bacillati</taxon>
        <taxon>Actinomycetota</taxon>
        <taxon>Actinomycetes</taxon>
        <taxon>Kitasatosporales</taxon>
        <taxon>Streptomycetaceae</taxon>
        <taxon>Streptomyces</taxon>
    </lineage>
</organism>
<name>METE_STRAW</name>
<reference key="1">
    <citation type="journal article" date="2001" name="Proc. Natl. Acad. Sci. U.S.A.">
        <title>Genome sequence of an industrial microorganism Streptomyces avermitilis: deducing the ability of producing secondary metabolites.</title>
        <authorList>
            <person name="Omura S."/>
            <person name="Ikeda H."/>
            <person name="Ishikawa J."/>
            <person name="Hanamoto A."/>
            <person name="Takahashi C."/>
            <person name="Shinose M."/>
            <person name="Takahashi Y."/>
            <person name="Horikawa H."/>
            <person name="Nakazawa H."/>
            <person name="Osonoe T."/>
            <person name="Kikuchi H."/>
            <person name="Shiba T."/>
            <person name="Sakaki Y."/>
            <person name="Hattori M."/>
        </authorList>
    </citation>
    <scope>NUCLEOTIDE SEQUENCE [LARGE SCALE GENOMIC DNA]</scope>
    <source>
        <strain>ATCC 31267 / DSM 46492 / JCM 5070 / NBRC 14893 / NCIMB 12804 / NRRL 8165 / MA-4680</strain>
    </source>
</reference>
<reference key="2">
    <citation type="journal article" date="2003" name="Nat. Biotechnol.">
        <title>Complete genome sequence and comparative analysis of the industrial microorganism Streptomyces avermitilis.</title>
        <authorList>
            <person name="Ikeda H."/>
            <person name="Ishikawa J."/>
            <person name="Hanamoto A."/>
            <person name="Shinose M."/>
            <person name="Kikuchi H."/>
            <person name="Shiba T."/>
            <person name="Sakaki Y."/>
            <person name="Hattori M."/>
            <person name="Omura S."/>
        </authorList>
    </citation>
    <scope>NUCLEOTIDE SEQUENCE [LARGE SCALE GENOMIC DNA]</scope>
    <source>
        <strain>ATCC 31267 / DSM 46492 / JCM 5070 / NBRC 14893 / NCIMB 12804 / NRRL 8165 / MA-4680</strain>
    </source>
</reference>
<comment type="function">
    <text evidence="1">Catalyzes the transfer of a methyl group from 5-methyltetrahydrofolate to homocysteine resulting in methionine formation.</text>
</comment>
<comment type="catalytic activity">
    <reaction evidence="1">
        <text>5-methyltetrahydropteroyltri-L-glutamate + L-homocysteine = tetrahydropteroyltri-L-glutamate + L-methionine</text>
        <dbReference type="Rhea" id="RHEA:21196"/>
        <dbReference type="ChEBI" id="CHEBI:57844"/>
        <dbReference type="ChEBI" id="CHEBI:58140"/>
        <dbReference type="ChEBI" id="CHEBI:58199"/>
        <dbReference type="ChEBI" id="CHEBI:58207"/>
        <dbReference type="EC" id="2.1.1.14"/>
    </reaction>
</comment>
<comment type="cofactor">
    <cofactor evidence="1">
        <name>Zn(2+)</name>
        <dbReference type="ChEBI" id="CHEBI:29105"/>
    </cofactor>
    <text evidence="1">Binds 1 zinc ion per subunit.</text>
</comment>
<comment type="pathway">
    <text evidence="1">Amino-acid biosynthesis; L-methionine biosynthesis via de novo pathway; L-methionine from L-homocysteine (MetE route): step 1/1.</text>
</comment>
<comment type="similarity">
    <text evidence="1">Belongs to the vitamin-B12 independent methionine synthase family.</text>
</comment>
<feature type="chain" id="PRO_0000098668" description="5-methyltetrahydropteroyltriglutamate--homocysteine methyltransferase">
    <location>
        <begin position="1"/>
        <end position="772"/>
    </location>
</feature>
<feature type="region of interest" description="Disordered" evidence="2">
    <location>
        <begin position="404"/>
        <end position="428"/>
    </location>
</feature>
<feature type="active site" description="Proton donor" evidence="1">
    <location>
        <position position="709"/>
    </location>
</feature>
<feature type="binding site" evidence="1">
    <location>
        <begin position="24"/>
        <end position="27"/>
    </location>
    <ligand>
        <name>5-methyltetrahydropteroyltri-L-glutamate</name>
        <dbReference type="ChEBI" id="CHEBI:58207"/>
    </ligand>
</feature>
<feature type="binding site" evidence="1">
    <location>
        <position position="120"/>
    </location>
    <ligand>
        <name>5-methyltetrahydropteroyltri-L-glutamate</name>
        <dbReference type="ChEBI" id="CHEBI:58207"/>
    </ligand>
</feature>
<feature type="binding site" evidence="1">
    <location>
        <begin position="446"/>
        <end position="448"/>
    </location>
    <ligand>
        <name>L-homocysteine</name>
        <dbReference type="ChEBI" id="CHEBI:58199"/>
    </ligand>
</feature>
<feature type="binding site" evidence="1">
    <location>
        <begin position="446"/>
        <end position="448"/>
    </location>
    <ligand>
        <name>L-methionine</name>
        <dbReference type="ChEBI" id="CHEBI:57844"/>
    </ligand>
</feature>
<feature type="binding site" evidence="1">
    <location>
        <position position="499"/>
    </location>
    <ligand>
        <name>L-homocysteine</name>
        <dbReference type="ChEBI" id="CHEBI:58199"/>
    </ligand>
</feature>
<feature type="binding site" evidence="1">
    <location>
        <position position="499"/>
    </location>
    <ligand>
        <name>L-methionine</name>
        <dbReference type="ChEBI" id="CHEBI:57844"/>
    </ligand>
</feature>
<feature type="binding site" evidence="1">
    <location>
        <position position="576"/>
    </location>
    <ligand>
        <name>5-methyltetrahydropteroyltri-L-glutamate</name>
        <dbReference type="ChEBI" id="CHEBI:58207"/>
    </ligand>
</feature>
<feature type="binding site" evidence="1">
    <location>
        <position position="614"/>
    </location>
    <ligand>
        <name>L-homocysteine</name>
        <dbReference type="ChEBI" id="CHEBI:58199"/>
    </ligand>
</feature>
<feature type="binding site" evidence="1">
    <location>
        <position position="614"/>
    </location>
    <ligand>
        <name>L-methionine</name>
        <dbReference type="ChEBI" id="CHEBI:57844"/>
    </ligand>
</feature>
<feature type="binding site" evidence="1">
    <location>
        <position position="620"/>
    </location>
    <ligand>
        <name>5-methyltetrahydropteroyltri-L-glutamate</name>
        <dbReference type="ChEBI" id="CHEBI:58207"/>
    </ligand>
</feature>
<feature type="binding site" evidence="1">
    <location>
        <position position="656"/>
    </location>
    <ligand>
        <name>Zn(2+)</name>
        <dbReference type="ChEBI" id="CHEBI:29105"/>
        <note>catalytic</note>
    </ligand>
</feature>
<feature type="binding site" evidence="1">
    <location>
        <position position="658"/>
    </location>
    <ligand>
        <name>Zn(2+)</name>
        <dbReference type="ChEBI" id="CHEBI:29105"/>
        <note>catalytic</note>
    </ligand>
</feature>
<feature type="binding site" evidence="1">
    <location>
        <position position="680"/>
    </location>
    <ligand>
        <name>Zn(2+)</name>
        <dbReference type="ChEBI" id="CHEBI:29105"/>
        <note>catalytic</note>
    </ligand>
</feature>
<feature type="binding site" evidence="1">
    <location>
        <position position="741"/>
    </location>
    <ligand>
        <name>Zn(2+)</name>
        <dbReference type="ChEBI" id="CHEBI:29105"/>
        <note>catalytic</note>
    </ligand>
</feature>
<sequence>MTAKSAAAAARATVYGYPRQGRGRELKKAIEGYWKGRLDADALRTTATGLRRDTWQQLAEAGIHEVPTGDFSYYDHVLDTSVMVGAIPARHRAAVEADALDGYFAMARGTQDVAPLEMTKWFDTNYHYLVPELGPDTVFSTDSAKQVAELGEALALGLTARPVLVGPVTYLLLAKPAPGVAADFDPLTLLDRLLPVYAEVLADLRAAGAEWVQLDEPALVQDRTPAELNAAERAYRVLGGLTDRPKLLVASYFDRLGDALPVLAEAPVEGLALDFAEGAAANLDALAAVGGLPGKRLVAGVVDGRNIWVNDLEKSLALLGTLLGLADRVDVAASCSLLHVPLDAAAERDIAPQVLRWLAFARQKTAEIVTLAKGLGHGTDAIAAQLAANRADLVSRADSALTRDPAVRSRTAATTDADARRSGPYPERAAAQRARLGLPLLPTTTIGSFPQTAELRTARADLRAGRIDSAGYEERIRAEIGEVISFQEKAGLDVLVHGEAERNDMVQYFAERLTGYLTTQHGWVQSYGTRYVRPPVLAGDISRPEPMTVPWTTYAQSLTDRPVKGMLTGPVTMLAWSFVRDDQPLGETARQVALALRDEVGDLEAAGTSVIQVDEPALRETLPLRAADRPAYLAWATEAFRLTTGGVRPDTQIHTHMCYAEFGDIVQAIDDLDADVISLEAARSHMQVARELAEHAYPREAGPGVYDIHSPRVPGVDETAALLRKGLEAIPAERLWVNPDCGLKTRGWPETRASLENLVAAARTVRAEHAGS</sequence>
<keyword id="KW-0028">Amino-acid biosynthesis</keyword>
<keyword id="KW-0479">Metal-binding</keyword>
<keyword id="KW-0486">Methionine biosynthesis</keyword>
<keyword id="KW-0489">Methyltransferase</keyword>
<keyword id="KW-1185">Reference proteome</keyword>
<keyword id="KW-0677">Repeat</keyword>
<keyword id="KW-0808">Transferase</keyword>
<keyword id="KW-0862">Zinc</keyword>
<protein>
    <recommendedName>
        <fullName evidence="1">5-methyltetrahydropteroyltriglutamate--homocysteine methyltransferase</fullName>
        <ecNumber evidence="1">2.1.1.14</ecNumber>
    </recommendedName>
    <alternativeName>
        <fullName evidence="1">Cobalamin-independent methionine synthase</fullName>
    </alternativeName>
    <alternativeName>
        <fullName evidence="1">Methionine synthase, vitamin-B12 independent isozyme</fullName>
    </alternativeName>
</protein>
<evidence type="ECO:0000255" key="1">
    <source>
        <dbReference type="HAMAP-Rule" id="MF_00172"/>
    </source>
</evidence>
<evidence type="ECO:0000256" key="2">
    <source>
        <dbReference type="SAM" id="MobiDB-lite"/>
    </source>
</evidence>
<accession>Q82LG4</accession>